<evidence type="ECO:0000255" key="1"/>
<evidence type="ECO:0000305" key="2"/>
<evidence type="ECO:0007829" key="3">
    <source>
        <dbReference type="PDB" id="3A5I"/>
    </source>
</evidence>
<evidence type="ECO:0007829" key="4">
    <source>
        <dbReference type="PDB" id="6AI0"/>
    </source>
</evidence>
<evidence type="ECO:0007829" key="5">
    <source>
        <dbReference type="PDB" id="6CH1"/>
    </source>
</evidence>
<evidence type="ECO:0007829" key="6">
    <source>
        <dbReference type="PDB" id="6CH3"/>
    </source>
</evidence>
<keyword id="KW-0002">3D-structure</keyword>
<keyword id="KW-1005">Bacterial flagellum biogenesis</keyword>
<keyword id="KW-1006">Bacterial flagellum protein export</keyword>
<keyword id="KW-0997">Cell inner membrane</keyword>
<keyword id="KW-1003">Cell membrane</keyword>
<keyword id="KW-0472">Membrane</keyword>
<keyword id="KW-0653">Protein transport</keyword>
<keyword id="KW-1185">Reference proteome</keyword>
<keyword id="KW-0812">Transmembrane</keyword>
<keyword id="KW-1133">Transmembrane helix</keyword>
<keyword id="KW-0813">Transport</keyword>
<dbReference type="EMBL" id="D32203">
    <property type="protein sequence ID" value="BAA06903.1"/>
    <property type="molecule type" value="Genomic_DNA"/>
</dbReference>
<dbReference type="EMBL" id="AE006468">
    <property type="protein sequence ID" value="AAL20829.1"/>
    <property type="molecule type" value="Genomic_DNA"/>
</dbReference>
<dbReference type="PIR" id="B55546">
    <property type="entry name" value="B55546"/>
</dbReference>
<dbReference type="RefSeq" id="NP_460870.1">
    <property type="nucleotide sequence ID" value="NC_003197.2"/>
</dbReference>
<dbReference type="RefSeq" id="WP_000002386.1">
    <property type="nucleotide sequence ID" value="NC_003197.2"/>
</dbReference>
<dbReference type="PDB" id="3A5I">
    <property type="method" value="X-ray"/>
    <property type="resolution" value="2.80 A"/>
    <property type="chains" value="A/B=328-692"/>
</dbReference>
<dbReference type="PDB" id="6AI0">
    <property type="method" value="X-ray"/>
    <property type="resolution" value="2.40 A"/>
    <property type="chains" value="A/B=328-692"/>
</dbReference>
<dbReference type="PDB" id="6AI1">
    <property type="method" value="X-ray"/>
    <property type="resolution" value="3.50 A"/>
    <property type="chains" value="A/B=328-692"/>
</dbReference>
<dbReference type="PDB" id="6AI2">
    <property type="method" value="X-ray"/>
    <property type="resolution" value="3.30 A"/>
    <property type="chains" value="A/B=328-692"/>
</dbReference>
<dbReference type="PDB" id="6AI3">
    <property type="method" value="X-ray"/>
    <property type="resolution" value="3.30 A"/>
    <property type="chains" value="A/B=328-692"/>
</dbReference>
<dbReference type="PDB" id="6CH1">
    <property type="method" value="X-ray"/>
    <property type="resolution" value="1.90 A"/>
    <property type="chains" value="A=360-692"/>
</dbReference>
<dbReference type="PDB" id="6CH2">
    <property type="method" value="X-ray"/>
    <property type="resolution" value="2.70 A"/>
    <property type="chains" value="A/B/C=360-692"/>
</dbReference>
<dbReference type="PDB" id="6CH3">
    <property type="method" value="X-ray"/>
    <property type="resolution" value="2.68 A"/>
    <property type="chains" value="A=360-690"/>
</dbReference>
<dbReference type="PDB" id="7CTN">
    <property type="method" value="X-ray"/>
    <property type="resolution" value="2.80 A"/>
    <property type="chains" value="A/B=328-692"/>
</dbReference>
<dbReference type="PDBsum" id="3A5I"/>
<dbReference type="PDBsum" id="6AI0"/>
<dbReference type="PDBsum" id="6AI1"/>
<dbReference type="PDBsum" id="6AI2"/>
<dbReference type="PDBsum" id="6AI3"/>
<dbReference type="PDBsum" id="6CH1"/>
<dbReference type="PDBsum" id="6CH2"/>
<dbReference type="PDBsum" id="6CH3"/>
<dbReference type="PDBsum" id="7CTN"/>
<dbReference type="SMR" id="P40729"/>
<dbReference type="IntAct" id="P40729">
    <property type="interactions" value="4"/>
</dbReference>
<dbReference type="STRING" id="99287.STM1913"/>
<dbReference type="TCDB" id="3.A.6.2.1">
    <property type="family name" value="the type iii (virulence-related) secretory pathway (iiisp) family"/>
</dbReference>
<dbReference type="PaxDb" id="99287-STM1913"/>
<dbReference type="GeneID" id="1253434"/>
<dbReference type="KEGG" id="stm:STM1913"/>
<dbReference type="PATRIC" id="fig|99287.12.peg.2029"/>
<dbReference type="HOGENOM" id="CLU_015346_3_0_6"/>
<dbReference type="OMA" id="RIRDNMQ"/>
<dbReference type="PhylomeDB" id="P40729"/>
<dbReference type="BioCyc" id="SENT99287:STM1913-MONOMER"/>
<dbReference type="EvolutionaryTrace" id="P40729"/>
<dbReference type="PHI-base" id="PHI:8731"/>
<dbReference type="Proteomes" id="UP000001014">
    <property type="component" value="Chromosome"/>
</dbReference>
<dbReference type="GO" id="GO:0005886">
    <property type="term" value="C:plasma membrane"/>
    <property type="evidence" value="ECO:0000318"/>
    <property type="project" value="GO_Central"/>
</dbReference>
<dbReference type="GO" id="GO:0044780">
    <property type="term" value="P:bacterial-type flagellum assembly"/>
    <property type="evidence" value="ECO:0000318"/>
    <property type="project" value="GO_Central"/>
</dbReference>
<dbReference type="GO" id="GO:0009306">
    <property type="term" value="P:protein secretion"/>
    <property type="evidence" value="ECO:0007669"/>
    <property type="project" value="InterPro"/>
</dbReference>
<dbReference type="FunFam" id="1.10.8.540:FF:000001">
    <property type="entry name" value="Flagellar biosynthesis protein FlhA"/>
    <property type="match status" value="1"/>
</dbReference>
<dbReference type="FunFam" id="3.40.30.60:FF:000001">
    <property type="entry name" value="Flagellar biosynthesis protein FlhA"/>
    <property type="match status" value="1"/>
</dbReference>
<dbReference type="FunFam" id="3.40.50.12790:FF:000001">
    <property type="entry name" value="Flagellar biosynthesis protein FlhA"/>
    <property type="match status" value="1"/>
</dbReference>
<dbReference type="Gene3D" id="3.40.30.60">
    <property type="entry name" value="FHIPEP family, domain 1"/>
    <property type="match status" value="1"/>
</dbReference>
<dbReference type="Gene3D" id="1.10.8.540">
    <property type="entry name" value="FHIPEP family, domain 3"/>
    <property type="match status" value="1"/>
</dbReference>
<dbReference type="Gene3D" id="3.40.50.12790">
    <property type="entry name" value="FHIPEP family, domain 4"/>
    <property type="match status" value="1"/>
</dbReference>
<dbReference type="InterPro" id="IPR042194">
    <property type="entry name" value="FHIPEP_1"/>
</dbReference>
<dbReference type="InterPro" id="IPR042193">
    <property type="entry name" value="FHIPEP_3"/>
</dbReference>
<dbReference type="InterPro" id="IPR042196">
    <property type="entry name" value="FHIPEP_4"/>
</dbReference>
<dbReference type="InterPro" id="IPR025505">
    <property type="entry name" value="FHIPEP_CS"/>
</dbReference>
<dbReference type="InterPro" id="IPR006301">
    <property type="entry name" value="FlhA"/>
</dbReference>
<dbReference type="InterPro" id="IPR001712">
    <property type="entry name" value="T3SS_FHIPEP"/>
</dbReference>
<dbReference type="NCBIfam" id="TIGR01398">
    <property type="entry name" value="FlhA"/>
    <property type="match status" value="1"/>
</dbReference>
<dbReference type="PANTHER" id="PTHR30161:SF1">
    <property type="entry name" value="FLAGELLAR BIOSYNTHESIS PROTEIN FLHA-RELATED"/>
    <property type="match status" value="1"/>
</dbReference>
<dbReference type="PANTHER" id="PTHR30161">
    <property type="entry name" value="FLAGELLAR EXPORT PROTEIN, MEMBRANE FLHA SUBUNIT-RELATED"/>
    <property type="match status" value="1"/>
</dbReference>
<dbReference type="Pfam" id="PF00771">
    <property type="entry name" value="FHIPEP"/>
    <property type="match status" value="1"/>
</dbReference>
<dbReference type="PIRSF" id="PIRSF005419">
    <property type="entry name" value="FlhA"/>
    <property type="match status" value="1"/>
</dbReference>
<dbReference type="PRINTS" id="PR00949">
    <property type="entry name" value="TYPE3IMAPROT"/>
</dbReference>
<dbReference type="PROSITE" id="PS00994">
    <property type="entry name" value="FHIPEP"/>
    <property type="match status" value="1"/>
</dbReference>
<name>FLHA_SALTY</name>
<proteinExistence type="evidence at protein level"/>
<gene>
    <name type="primary">flhA</name>
    <name type="ordered locus">STM1913</name>
</gene>
<comment type="function">
    <text>Required for formation of the rod structure of the flagellar apparatus. Together with FliI and FliH, may constitute the export apparatus of flagellin.</text>
</comment>
<comment type="interaction">
    <interactant intactId="EBI-6410261">
        <id>P40729</id>
    </interactant>
    <interactant intactId="EBI-6410310">
        <id>P15934</id>
        <label>fliH</label>
    </interactant>
    <organismsDiffer>false</organismsDiffer>
    <experiments>2</experiments>
</comment>
<comment type="subcellular location">
    <subcellularLocation>
        <location>Cell inner membrane</location>
        <topology>Multi-pass membrane protein</topology>
    </subcellularLocation>
</comment>
<comment type="similarity">
    <text evidence="2">Belongs to the FHIPEP (flagella/HR/invasion proteins export pore) family.</text>
</comment>
<organism>
    <name type="scientific">Salmonella typhimurium (strain LT2 / SGSC1412 / ATCC 700720)</name>
    <dbReference type="NCBI Taxonomy" id="99287"/>
    <lineage>
        <taxon>Bacteria</taxon>
        <taxon>Pseudomonadati</taxon>
        <taxon>Pseudomonadota</taxon>
        <taxon>Gammaproteobacteria</taxon>
        <taxon>Enterobacterales</taxon>
        <taxon>Enterobacteriaceae</taxon>
        <taxon>Salmonella</taxon>
    </lineage>
</organism>
<sequence length="692" mass="74849">MANLVAMLRLPSNLKSTQWQILAGPILILLILSMMVLPLPAFILDLLFTFNIALSIMVLLVAMFTQRTLDFAAFPTILLFTTLLRLALNVASTRIILMEGHTGAAAAGKVVEAFGHFLVGGNFAIGIVVFIILVIINFMVITKGAGRIAEVGARFVLDGMPGKQMAIDADLNAGLIGEDEAKKRRSEVTQEADFYGSMDGASKFVRGDAIAGILIMVINVVGGLLVGVLQHGMSIGSAAESYTLLTIGDGLVAQIPALVISTAAGVIVTRVSTDQDVGEQMVGQLFSNPRVMLLAAAVLGLLGMVPGMPNLVFLLFTAALLGLAWWLRGREEKAPEEPQPVKMPENNSVVEATWNDVQLEDSLGMEVGYRLIPMVDFQQDGELLGRIRSIRKKFAQDMGFLPPVVHIRDNMDLQPARYRILMKGVEIGSGDAYPGRWLAINPGTAAGTLPGEKTVDPAFGLDAIWIESALKEQAQIQGFTVVEASTVVATHLNHLIGQFSAELFGRQEAQQLLDRVSQEMPKLTEDLVPGVVTLTTLHKVLQNLLAEKVPIRDMRTILETLAEHAPLQSDPHELTAVVRVALGRAITQQWFPGNEEVQVIGLDTALERLLLQALQGGGGLEPGLADRLLAQTQEALSRQEMLGAPPVLLVNHALRPLLSRFLRRSLPQLVVLSNLELSDNRHIRMTATIGGK</sequence>
<accession>P40729</accession>
<protein>
    <recommendedName>
        <fullName>Flagellar biosynthesis protein FlhA</fullName>
    </recommendedName>
</protein>
<reference key="1">
    <citation type="journal article" date="1994" name="J. Bacteriol.">
        <title>Molecular characterization of the Salmonella typhimurium flhB operon and its protein products.</title>
        <authorList>
            <person name="Minamino T."/>
            <person name="Iino T."/>
            <person name="Kutsukake K."/>
        </authorList>
    </citation>
    <scope>NUCLEOTIDE SEQUENCE [GENOMIC DNA]</scope>
    <source>
        <strain>KK1004</strain>
    </source>
</reference>
<reference key="2">
    <citation type="journal article" date="2001" name="Nature">
        <title>Complete genome sequence of Salmonella enterica serovar Typhimurium LT2.</title>
        <authorList>
            <person name="McClelland M."/>
            <person name="Sanderson K.E."/>
            <person name="Spieth J."/>
            <person name="Clifton S.W."/>
            <person name="Latreille P."/>
            <person name="Courtney L."/>
            <person name="Porwollik S."/>
            <person name="Ali J."/>
            <person name="Dante M."/>
            <person name="Du F."/>
            <person name="Hou S."/>
            <person name="Layman D."/>
            <person name="Leonard S."/>
            <person name="Nguyen C."/>
            <person name="Scott K."/>
            <person name="Holmes A."/>
            <person name="Grewal N."/>
            <person name="Mulvaney E."/>
            <person name="Ryan E."/>
            <person name="Sun H."/>
            <person name="Florea L."/>
            <person name="Miller W."/>
            <person name="Stoneking T."/>
            <person name="Nhan M."/>
            <person name="Waterston R."/>
            <person name="Wilson R.K."/>
        </authorList>
    </citation>
    <scope>NUCLEOTIDE SEQUENCE [LARGE SCALE GENOMIC DNA]</scope>
    <source>
        <strain>LT2 / SGSC1412 / ATCC 700720</strain>
    </source>
</reference>
<feature type="chain" id="PRO_0000190017" description="Flagellar biosynthesis protein FlhA">
    <location>
        <begin position="1"/>
        <end position="692"/>
    </location>
</feature>
<feature type="transmembrane region" description="Helical" evidence="1">
    <location>
        <begin position="24"/>
        <end position="44"/>
    </location>
</feature>
<feature type="transmembrane region" description="Helical" evidence="1">
    <location>
        <begin position="46"/>
        <end position="66"/>
    </location>
</feature>
<feature type="transmembrane region" description="Helical" evidence="1">
    <location>
        <begin position="71"/>
        <end position="91"/>
    </location>
</feature>
<feature type="transmembrane region" description="Helical" evidence="1">
    <location>
        <begin position="95"/>
        <end position="115"/>
    </location>
</feature>
<feature type="transmembrane region" description="Helical" evidence="1">
    <location>
        <begin position="121"/>
        <end position="141"/>
    </location>
</feature>
<feature type="transmembrane region" description="Helical" evidence="1">
    <location>
        <begin position="209"/>
        <end position="229"/>
    </location>
</feature>
<feature type="transmembrane region" description="Helical" evidence="1">
    <location>
        <begin position="247"/>
        <end position="267"/>
    </location>
</feature>
<feature type="transmembrane region" description="Helical" evidence="1">
    <location>
        <begin position="296"/>
        <end position="316"/>
    </location>
</feature>
<feature type="helix" evidence="3">
    <location>
        <begin position="354"/>
        <end position="356"/>
    </location>
</feature>
<feature type="strand" evidence="5">
    <location>
        <begin position="362"/>
        <end position="367"/>
    </location>
</feature>
<feature type="helix" evidence="5">
    <location>
        <begin position="369"/>
        <end position="371"/>
    </location>
</feature>
<feature type="helix" evidence="5">
    <location>
        <begin position="373"/>
        <end position="375"/>
    </location>
</feature>
<feature type="strand" evidence="4">
    <location>
        <begin position="377"/>
        <end position="379"/>
    </location>
</feature>
<feature type="helix" evidence="5">
    <location>
        <begin position="382"/>
        <end position="398"/>
    </location>
</feature>
<feature type="strand" evidence="5">
    <location>
        <begin position="406"/>
        <end position="409"/>
    </location>
</feature>
<feature type="strand" evidence="5">
    <location>
        <begin position="417"/>
        <end position="422"/>
    </location>
</feature>
<feature type="strand" evidence="5">
    <location>
        <begin position="425"/>
        <end position="431"/>
    </location>
</feature>
<feature type="strand" evidence="5">
    <location>
        <begin position="437"/>
        <end position="440"/>
    </location>
</feature>
<feature type="strand" evidence="5">
    <location>
        <begin position="450"/>
        <end position="455"/>
    </location>
</feature>
<feature type="turn" evidence="5">
    <location>
        <begin position="457"/>
        <end position="459"/>
    </location>
</feature>
<feature type="strand" evidence="5">
    <location>
        <begin position="462"/>
        <end position="466"/>
    </location>
</feature>
<feature type="helix" evidence="5">
    <location>
        <begin position="468"/>
        <end position="470"/>
    </location>
</feature>
<feature type="helix" evidence="5">
    <location>
        <begin position="471"/>
        <end position="476"/>
    </location>
</feature>
<feature type="strand" evidence="5">
    <location>
        <begin position="480"/>
        <end position="483"/>
    </location>
</feature>
<feature type="helix" evidence="5">
    <location>
        <begin position="484"/>
        <end position="498"/>
    </location>
</feature>
<feature type="helix" evidence="5">
    <location>
        <begin position="500"/>
        <end position="503"/>
    </location>
</feature>
<feature type="helix" evidence="5">
    <location>
        <begin position="506"/>
        <end position="519"/>
    </location>
</feature>
<feature type="helix" evidence="5">
    <location>
        <begin position="521"/>
        <end position="527"/>
    </location>
</feature>
<feature type="turn" evidence="5">
    <location>
        <begin position="528"/>
        <end position="531"/>
    </location>
</feature>
<feature type="helix" evidence="5">
    <location>
        <begin position="534"/>
        <end position="546"/>
    </location>
</feature>
<feature type="helix" evidence="5">
    <location>
        <begin position="554"/>
        <end position="564"/>
    </location>
</feature>
<feature type="turn" evidence="5">
    <location>
        <begin position="565"/>
        <end position="567"/>
    </location>
</feature>
<feature type="helix" evidence="5">
    <location>
        <begin position="571"/>
        <end position="581"/>
    </location>
</feature>
<feature type="helix" evidence="5">
    <location>
        <begin position="583"/>
        <end position="590"/>
    </location>
</feature>
<feature type="strand" evidence="5">
    <location>
        <begin position="593"/>
        <end position="595"/>
    </location>
</feature>
<feature type="strand" evidence="5">
    <location>
        <begin position="597"/>
        <end position="602"/>
    </location>
</feature>
<feature type="helix" evidence="5">
    <location>
        <begin position="604"/>
        <end position="614"/>
    </location>
</feature>
<feature type="strand" evidence="4">
    <location>
        <begin position="615"/>
        <end position="617"/>
    </location>
</feature>
<feature type="helix" evidence="5">
    <location>
        <begin position="622"/>
        <end position="642"/>
    </location>
</feature>
<feature type="strand" evidence="5">
    <location>
        <begin position="646"/>
        <end position="650"/>
    </location>
</feature>
<feature type="helix" evidence="5">
    <location>
        <begin position="652"/>
        <end position="654"/>
    </location>
</feature>
<feature type="helix" evidence="5">
    <location>
        <begin position="655"/>
        <end position="663"/>
    </location>
</feature>
<feature type="strand" evidence="5">
    <location>
        <begin position="670"/>
        <end position="673"/>
    </location>
</feature>
<feature type="turn" evidence="5">
    <location>
        <begin position="674"/>
        <end position="676"/>
    </location>
</feature>
<feature type="strand" evidence="6">
    <location>
        <begin position="679"/>
        <end position="681"/>
    </location>
</feature>
<feature type="strand" evidence="5">
    <location>
        <begin position="683"/>
        <end position="689"/>
    </location>
</feature>